<gene>
    <name evidence="1" type="primary">coaA</name>
    <name type="ordered locus">JTY_1125</name>
</gene>
<dbReference type="EC" id="2.7.1.33" evidence="1"/>
<dbReference type="EMBL" id="AP010918">
    <property type="protein sequence ID" value="BAH25415.1"/>
    <property type="molecule type" value="Genomic_DNA"/>
</dbReference>
<dbReference type="RefSeq" id="WP_003405790.1">
    <property type="nucleotide sequence ID" value="NZ_CP014566.1"/>
</dbReference>
<dbReference type="SMR" id="C1AM86"/>
<dbReference type="GeneID" id="45425066"/>
<dbReference type="KEGG" id="mbt:JTY_1125"/>
<dbReference type="HOGENOM" id="CLU_053818_1_1_11"/>
<dbReference type="UniPathway" id="UPA00241">
    <property type="reaction ID" value="UER00352"/>
</dbReference>
<dbReference type="GO" id="GO:0005737">
    <property type="term" value="C:cytoplasm"/>
    <property type="evidence" value="ECO:0007669"/>
    <property type="project" value="UniProtKB-SubCell"/>
</dbReference>
<dbReference type="GO" id="GO:0005524">
    <property type="term" value="F:ATP binding"/>
    <property type="evidence" value="ECO:0007669"/>
    <property type="project" value="UniProtKB-UniRule"/>
</dbReference>
<dbReference type="GO" id="GO:0004594">
    <property type="term" value="F:pantothenate kinase activity"/>
    <property type="evidence" value="ECO:0007669"/>
    <property type="project" value="UniProtKB-UniRule"/>
</dbReference>
<dbReference type="GO" id="GO:0015937">
    <property type="term" value="P:coenzyme A biosynthetic process"/>
    <property type="evidence" value="ECO:0007669"/>
    <property type="project" value="UniProtKB-UniRule"/>
</dbReference>
<dbReference type="CDD" id="cd02025">
    <property type="entry name" value="PanK"/>
    <property type="match status" value="1"/>
</dbReference>
<dbReference type="FunFam" id="3.40.50.300:FF:000242">
    <property type="entry name" value="Pantothenate kinase"/>
    <property type="match status" value="1"/>
</dbReference>
<dbReference type="Gene3D" id="3.40.50.300">
    <property type="entry name" value="P-loop containing nucleotide triphosphate hydrolases"/>
    <property type="match status" value="1"/>
</dbReference>
<dbReference type="HAMAP" id="MF_00215">
    <property type="entry name" value="Pantothen_kinase_1"/>
    <property type="match status" value="1"/>
</dbReference>
<dbReference type="InterPro" id="IPR027417">
    <property type="entry name" value="P-loop_NTPase"/>
</dbReference>
<dbReference type="InterPro" id="IPR004566">
    <property type="entry name" value="PanK"/>
</dbReference>
<dbReference type="InterPro" id="IPR006083">
    <property type="entry name" value="PRK/URK"/>
</dbReference>
<dbReference type="NCBIfam" id="TIGR00554">
    <property type="entry name" value="panK_bact"/>
    <property type="match status" value="1"/>
</dbReference>
<dbReference type="PANTHER" id="PTHR10285">
    <property type="entry name" value="URIDINE KINASE"/>
    <property type="match status" value="1"/>
</dbReference>
<dbReference type="Pfam" id="PF00485">
    <property type="entry name" value="PRK"/>
    <property type="match status" value="1"/>
</dbReference>
<dbReference type="PIRSF" id="PIRSF000545">
    <property type="entry name" value="Pantothenate_kin"/>
    <property type="match status" value="1"/>
</dbReference>
<dbReference type="SUPFAM" id="SSF52540">
    <property type="entry name" value="P-loop containing nucleoside triphosphate hydrolases"/>
    <property type="match status" value="1"/>
</dbReference>
<proteinExistence type="inferred from homology"/>
<comment type="catalytic activity">
    <reaction evidence="1">
        <text>(R)-pantothenate + ATP = (R)-4'-phosphopantothenate + ADP + H(+)</text>
        <dbReference type="Rhea" id="RHEA:16373"/>
        <dbReference type="ChEBI" id="CHEBI:10986"/>
        <dbReference type="ChEBI" id="CHEBI:15378"/>
        <dbReference type="ChEBI" id="CHEBI:29032"/>
        <dbReference type="ChEBI" id="CHEBI:30616"/>
        <dbReference type="ChEBI" id="CHEBI:456216"/>
        <dbReference type="EC" id="2.7.1.33"/>
    </reaction>
</comment>
<comment type="pathway">
    <text evidence="1">Cofactor biosynthesis; coenzyme A biosynthesis; CoA from (R)-pantothenate: step 1/5.</text>
</comment>
<comment type="subcellular location">
    <subcellularLocation>
        <location evidence="1">Cytoplasm</location>
    </subcellularLocation>
</comment>
<comment type="similarity">
    <text evidence="1">Belongs to the prokaryotic pantothenate kinase family.</text>
</comment>
<name>COAA_MYCBT</name>
<organism>
    <name type="scientific">Mycobacterium bovis (strain BCG / Tokyo 172 / ATCC 35737 / TMC 1019)</name>
    <dbReference type="NCBI Taxonomy" id="561275"/>
    <lineage>
        <taxon>Bacteria</taxon>
        <taxon>Bacillati</taxon>
        <taxon>Actinomycetota</taxon>
        <taxon>Actinomycetes</taxon>
        <taxon>Mycobacteriales</taxon>
        <taxon>Mycobacteriaceae</taxon>
        <taxon>Mycobacterium</taxon>
        <taxon>Mycobacterium tuberculosis complex</taxon>
    </lineage>
</organism>
<protein>
    <recommendedName>
        <fullName evidence="1">Pantothenate kinase</fullName>
        <ecNumber evidence="1">2.7.1.33</ecNumber>
    </recommendedName>
    <alternativeName>
        <fullName evidence="1">Pantothenic acid kinase</fullName>
    </alternativeName>
</protein>
<keyword id="KW-0067">ATP-binding</keyword>
<keyword id="KW-0173">Coenzyme A biosynthesis</keyword>
<keyword id="KW-0963">Cytoplasm</keyword>
<keyword id="KW-0418">Kinase</keyword>
<keyword id="KW-0547">Nucleotide-binding</keyword>
<keyword id="KW-0808">Transferase</keyword>
<accession>C1AM86</accession>
<sequence length="312" mass="35657">MSRLSEPSPYVEFDRRQWRALRMSTPLALTEEELVGLRGLGEQIDLLEVEEVYLPLARLIHLQVAARQRLFAATAEFLGEPQQNPDRPVPFIIGVAGSVAVGKSTTARVLQALLARWDHHPRVDLVTTDGFLYPNAELQRRNLMHRKGFPESYNRRALMRFVTSVKSGSDYACAPVYSHLHYDIIPGAEQVVRHPDILILEGLNVLQTGPTLMVSDLFDFSLYVDARIEDIEQWYVSRFLAMRTTAFADPESHFHHYAAFSDSQAVVAAREIWRTINRPNLVENILPTRPRATLVLRKDADHSINRLRLRKL</sequence>
<reference key="1">
    <citation type="journal article" date="2009" name="Vaccine">
        <title>Whole genome sequence analysis of Mycobacterium bovis bacillus Calmette-Guerin (BCG) Tokyo 172: a comparative study of BCG vaccine substrains.</title>
        <authorList>
            <person name="Seki M."/>
            <person name="Honda I."/>
            <person name="Fujita I."/>
            <person name="Yano I."/>
            <person name="Yamamoto S."/>
            <person name="Koyama A."/>
        </authorList>
    </citation>
    <scope>NUCLEOTIDE SEQUENCE [LARGE SCALE GENOMIC DNA]</scope>
    <source>
        <strain>BCG / Tokyo 172 / ATCC 35737 / TMC 1019</strain>
    </source>
</reference>
<feature type="chain" id="PRO_1000124801" description="Pantothenate kinase">
    <location>
        <begin position="1"/>
        <end position="312"/>
    </location>
</feature>
<feature type="binding site" evidence="1">
    <location>
        <begin position="97"/>
        <end position="104"/>
    </location>
    <ligand>
        <name>ATP</name>
        <dbReference type="ChEBI" id="CHEBI:30616"/>
    </ligand>
</feature>
<evidence type="ECO:0000255" key="1">
    <source>
        <dbReference type="HAMAP-Rule" id="MF_00215"/>
    </source>
</evidence>